<organism>
    <name type="scientific">Homo sapiens</name>
    <name type="common">Human</name>
    <dbReference type="NCBI Taxonomy" id="9606"/>
    <lineage>
        <taxon>Eukaryota</taxon>
        <taxon>Metazoa</taxon>
        <taxon>Chordata</taxon>
        <taxon>Craniata</taxon>
        <taxon>Vertebrata</taxon>
        <taxon>Euteleostomi</taxon>
        <taxon>Mammalia</taxon>
        <taxon>Eutheria</taxon>
        <taxon>Euarchontoglires</taxon>
        <taxon>Primates</taxon>
        <taxon>Haplorrhini</taxon>
        <taxon>Catarrhini</taxon>
        <taxon>Hominidae</taxon>
        <taxon>Homo</taxon>
    </lineage>
</organism>
<keyword id="KW-0002">3D-structure</keyword>
<keyword id="KW-1003">Cell membrane</keyword>
<keyword id="KW-0225">Disease variant</keyword>
<keyword id="KW-1015">Disulfide bond</keyword>
<keyword id="KW-0325">Glycoprotein</keyword>
<keyword id="KW-0407">Ion channel</keyword>
<keyword id="KW-0406">Ion transport</keyword>
<keyword id="KW-0472">Membrane</keyword>
<keyword id="KW-0597">Phosphoprotein</keyword>
<keyword id="KW-1267">Proteomics identification</keyword>
<keyword id="KW-1185">Reference proteome</keyword>
<keyword id="KW-0915">Sodium</keyword>
<keyword id="KW-0894">Sodium channel</keyword>
<keyword id="KW-0739">Sodium transport</keyword>
<keyword id="KW-0812">Transmembrane</keyword>
<keyword id="KW-1133">Transmembrane helix</keyword>
<keyword id="KW-0813">Transport</keyword>
<keyword id="KW-0832">Ubl conjugation</keyword>
<name>SCNNG_HUMAN</name>
<gene>
    <name evidence="31" type="primary">SCNN1G</name>
</gene>
<accession>P51170</accession>
<accession>P78437</accession>
<accession>Q6PCC2</accession>
<accession>Q93023</accession>
<accession>Q93024</accession>
<accession>Q93025</accession>
<accession>Q93026</accession>
<accession>Q93027</accession>
<accession>Q96TD2</accession>
<sequence>MAPGEKIKAKIKKNLPVTGPQAPTIKELMRWYCLNTNTHGCRRIVVSRGRLRRLLWIGFTLTAVALILWQCALLVFSFYTVSVSIKVHFRKLDFPAVTICNINPYKYSTVRHLLADLEQETREALKSLYGFPESRKRREAESWNSVSEGKQPRFSHRIPLLIFDQDEKGKARDFFTGRKRKVGGSIIHKASNVMHIESKQVVGFQLCSNDTSDCATYTFSSGINAIQEWYKLHYMNIMAQVPLEKKINMSYSAEELLVTCFFDGVSCDARNFTLFHHPMHGNCYTFNNRENETILSTSMGGSEYGLQVILYINEEEYNPFLVSSTGAKVIIHRQDEYPFVEDVGTEIETAMVTSIGMHLTESFKLSEPYSQCTEDGSDVPIRNIYNAAYSLQICLHSCFQTKMVEKCGCAQYSQPLPPAANYCNYQQHPNWMYCYYQLHRAFVQEELGCQSVCKEACSFKEWTLTTSLAQWPSVVSEKWLLPVLTWDQGRQVNKKLNKTDLAKLLIFYKDLNQRSIMESPANSIEMLLSNFGGQLGLWMSCSVVCVIEIIEVFFIDFFSIIARRQWQKAKEWWAWKQAPPCPEAPRSPQGQDNPALDIDDDLPTFNSALHLPPALGTQVPGTPPPKYNTLRLERAFSNQLTDTQMLDEL</sequence>
<comment type="function">
    <text evidence="7 14 15 18 19 20 22 23 24 27">This is one of the three pore-forming subunits of the heterotrimeric epithelial sodium channel (ENaC), a critical regulator of sodium balance and fluid homeostasis (PubMed:30251954, PubMed:32729833, PubMed:7550319, PubMed:7762608, PubMed:9792722). ENaC operates in epithelial tissues, where it mediates the electrodiffusion of sodium ions from extracellular fluid through the apical membrane of cells, with water following osmotically (PubMed:24124190). It plays a key role in maintaining sodium homeostasis through electrogenic sodium reabsorption in the kidneys (PubMed:12107247, PubMed:7550319, PubMed:8640238). Additionally, ENaC is essential for airway surface liquid homeostasis, which is crucial for proper mucus clearance (PubMed:18507830, PubMed:19017867, PubMed:24124190).</text>
</comment>
<comment type="catalytic activity">
    <reaction evidence="19 20 23 27">
        <text>Na(+)(in) = Na(+)(out)</text>
        <dbReference type="Rhea" id="RHEA:34963"/>
        <dbReference type="ChEBI" id="CHEBI:29101"/>
    </reaction>
</comment>
<comment type="activity regulation">
    <text evidence="23 27">Originally identified and characterized by its inhibition by the diuretic drug amiloride.</text>
</comment>
<comment type="subunit">
    <text evidence="8 10 17 18 19 20 21 26">Component of the heterotrimeric epithelial sodium channel (ENaC) composed of an alpha/SCNN1A, a beta/SCNN1B and a gamma/SCNN1G subunit (PubMed:30251954, PubMed:32729833). An additional delta/SCNN1D subunit can replace the alpha/SCNN1A subunit to form an alternative channel with specific properties (PubMed:16423824, PubMed:7499195). Interacts with WWP1 (via WW domains) (PubMed:9169421). Interacts with WWP2 (via WW domains); inhibits the channel (PubMed:12167593, PubMed:9169421). Interacts with the full-length immature form of PCSK9 (pro-PCSK9); inhibits ENaC by promoting its proteasomal degradation (PubMed:22493497). Interacts with BPIFA1; the interaction is indirect via SCNN1B and inhibits the proteolytic maturation of SCNN1A and SCNN1G and the activation of ENaC (PubMed:24124190).</text>
</comment>
<comment type="interaction">
    <interactant intactId="EBI-2547354">
        <id>P51170</id>
    </interactant>
    <interactant intactId="EBI-7845444">
        <id>P37088</id>
        <label>SCNN1A</label>
    </interactant>
    <organismsDiffer>false</organismsDiffer>
    <experiments>3</experiments>
</comment>
<comment type="subcellular location">
    <subcellularLocation>
        <location evidence="18">Apical cell membrane</location>
        <topology evidence="19 20">Multi-pass membrane protein</topology>
    </subcellularLocation>
</comment>
<comment type="tissue specificity">
    <text evidence="16">Expressed in kidney (at protein level).</text>
</comment>
<comment type="PTM">
    <text evidence="1">Phosphorylated on serine and threonine residues. Aldosterone and insulin increase the basal level of phosphorylation.</text>
</comment>
<comment type="PTM">
    <text evidence="6 8 12 27">Ubiquitinated. Can be ubiquitinated at multiple sites and undergo monoubiquitination and polyubiquitination. Ubiquitination by NEDD4 or NEDD4L inhibits the ENaC channel through endocytosis, intracellular retention and degradation of its individual subunits.</text>
</comment>
<comment type="PTM">
    <text evidence="18">ENaC is activated through the proteolytic maturation of its subunits. Furin cleaves the SCNN1G subunit first, followed by cleavage by prostasin (PRSS8), which results in a stepwise increase in the open probability of the channel due to the release of an inhibitory tract (PubMed:24124190). BPIFA1, which is recruited by the SCNN1B subunit, prevents the proteolytic activation of ENaC (PubMed:24124190).</text>
</comment>
<comment type="PTM">
    <text evidence="2">N-glycosylated. N-linked glycans are processed to complex type during ENaC complex assembly and transport to the plasma membrane.</text>
</comment>
<comment type="disease" evidence="9 13 22">
    <disease id="DI-05331">
        <name>Liddle syndrome 2</name>
        <acronym>LIDLS2</acronym>
        <description>A form of Liddle syndrome, an autosomal dominant disorder characterized by early onset of hypertension, hypokalemic alkalosis, and suppression of plasma renin activity and aldosterone secretion.</description>
        <dbReference type="MIM" id="618114"/>
    </disease>
    <text>The disease is caused by variants affecting the gene represented in this entry.</text>
</comment>
<comment type="disease" evidence="14 15">
    <disease id="DI-02488">
        <name>Bronchiectasis with or without elevated sweat chloride 3</name>
        <acronym>BESC3</acronym>
        <description>A debilitating respiratory disease characterized by chronic, abnormal dilatation of the bronchi and other cystic fibrosis-like symptoms in the absence of known causes of bronchiectasis (cystic fibrosis, autoimmune diseases, ciliary dyskinesia, common variable immunodeficiency, foreign body obstruction). Clinical features include sub-normal lung function, sinopulmonary infections, chronic productive cough, excessive sputum production, and elevated sweat chloride in some cases.</description>
        <dbReference type="MIM" id="613071"/>
    </disease>
    <text>The disease is caused by variants affecting the gene represented in this entry.</text>
</comment>
<comment type="disease" evidence="24">
    <disease id="DI-06538">
        <name>Pseudohypoaldosteronism 1B3, autosomal recessive</name>
        <acronym>PHA1B3</acronym>
        <description>A form of pseudohypoaldosteronism type 1, a rare salt wasting disease resulting from target organ unresponsiveness to mineralocorticoids. The disorder affects multiple organs, and is characterized by an often fulminant presentation in the neonatal period with dehydration, hyponatremia, hyperkalemia, metabolic acidosis, failure to thrive and weight loss.</description>
        <dbReference type="MIM" id="620126"/>
    </disease>
    <text>The disease is caused by variants affecting the gene represented in this entry.</text>
</comment>
<comment type="similarity">
    <text evidence="30">Belongs to the amiloride-sensitive sodium channel (TC 1.A.6) family. SCNN1G subfamily.</text>
</comment>
<protein>
    <recommendedName>
        <fullName evidence="28">Epithelial sodium channel subunit gamma</fullName>
        <shortName evidence="28">ENaC subunit gamma</shortName>
        <shortName>ENaCG</shortName>
        <shortName>Epithelial Na(+) channel subunit gamma</shortName>
        <shortName>Gamma-ENaC</shortName>
    </recommendedName>
    <alternativeName>
        <fullName evidence="29">Amiloride-sensitive sodium channel subunit gamma</fullName>
    </alternativeName>
    <alternativeName>
        <fullName>Gamma-NaCH</fullName>
    </alternativeName>
    <alternativeName>
        <fullName>Nonvoltage-gated sodium channel 1 subunit gamma</fullName>
    </alternativeName>
    <alternativeName>
        <fullName>SCNEG</fullName>
    </alternativeName>
    <alternativeName>
        <fullName evidence="31">Sodium channel epithelial 1 subunit gamma</fullName>
    </alternativeName>
</protein>
<feature type="chain" id="PRO_0000181276" description="Epithelial sodium channel subunit gamma">
    <location>
        <begin position="1"/>
        <end position="649"/>
    </location>
</feature>
<feature type="topological domain" description="Cytoplasmic" evidence="19 20 32 33">
    <location>
        <begin position="1"/>
        <end position="55"/>
    </location>
</feature>
<feature type="transmembrane region" description="Helical; Name=1" evidence="3">
    <location>
        <begin position="56"/>
        <end position="76"/>
    </location>
</feature>
<feature type="topological domain" description="Extracellular" evidence="19 20 32 33">
    <location>
        <begin position="77"/>
        <end position="541"/>
    </location>
</feature>
<feature type="transmembrane region" description="Helical; Name=2" evidence="3">
    <location>
        <begin position="542"/>
        <end position="562"/>
    </location>
</feature>
<feature type="topological domain" description="Cytoplasmic" evidence="19 20 32 33">
    <location>
        <begin position="563"/>
        <end position="649"/>
    </location>
</feature>
<feature type="region of interest" description="Gating release of inhibition by proteolysis (GRIP); protease-sensitive region that is responsible for the proteolytic activation of the channel" evidence="19 20">
    <location>
        <begin position="135"/>
        <end position="221"/>
    </location>
</feature>
<feature type="short sequence motif" description="PY motif; recruits WW domain-containing proteins and is thereby required for ubiquitination and inhibition of the channel by NEDD4 and NEDD4L" evidence="12">
    <location>
        <begin position="623"/>
        <end position="627"/>
    </location>
</feature>
<feature type="site" description="Cleavage; by furin" evidence="2">
    <location>
        <begin position="138"/>
        <end position="139"/>
    </location>
</feature>
<feature type="site" description="Cleavage; by PRSS8" evidence="2">
    <location>
        <begin position="181"/>
        <end position="182"/>
    </location>
</feature>
<feature type="glycosylation site" description="N-linked (GlcNAc...) asparagine" evidence="3">
    <location>
        <position position="209"/>
    </location>
</feature>
<feature type="glycosylation site" description="N-linked (GlcNAc...) asparagine" evidence="3">
    <location>
        <position position="497"/>
    </location>
</feature>
<feature type="disulfide bond" evidence="19 20 32 33">
    <location>
        <begin position="100"/>
        <end position="283"/>
    </location>
</feature>
<feature type="disulfide bond" evidence="19 20 32 33">
    <location>
        <begin position="207"/>
        <end position="214"/>
    </location>
</feature>
<feature type="disulfide bond" evidence="19 20 32 33">
    <location>
        <begin position="260"/>
        <end position="267"/>
    </location>
</feature>
<feature type="disulfide bond" evidence="19 20 32 33">
    <location>
        <begin position="372"/>
        <end position="457"/>
    </location>
</feature>
<feature type="disulfide bond" evidence="19 20 32 33">
    <location>
        <begin position="394"/>
        <end position="453"/>
    </location>
</feature>
<feature type="disulfide bond" evidence="19 20 32 33">
    <location>
        <begin position="398"/>
        <end position="449"/>
    </location>
</feature>
<feature type="disulfide bond" evidence="19 20 32 33">
    <location>
        <begin position="407"/>
        <end position="434"/>
    </location>
</feature>
<feature type="disulfide bond" evidence="19 20 32 33">
    <location>
        <begin position="409"/>
        <end position="423"/>
    </location>
</feature>
<feature type="sequence variant" id="VAR_014893" description="In dbSNP:rs5733." evidence="4">
    <original>G</original>
    <variation>C</variation>
    <location>
        <position position="49"/>
    </location>
</feature>
<feature type="sequence variant" id="VAR_036483" description="In a colorectal cancer sample; somatic mutation; dbSNP:rs1183385193." evidence="11">
    <original>G</original>
    <variation>R</variation>
    <location>
        <position position="58"/>
    </location>
</feature>
<feature type="sequence variant" id="VAR_015842" evidence="5 23">
    <original>R</original>
    <variation>W</variation>
    <location>
        <position position="178"/>
    </location>
</feature>
<feature type="sequence variant" id="VAR_014894" description="In a patient with bronchiectasis; dbSNP:rs5736." evidence="4 14">
    <original>G</original>
    <variation>S</variation>
    <location>
        <position position="183"/>
    </location>
</feature>
<feature type="sequence variant" id="VAR_034485" description="In a patient with bronchiectasis; dbSNP:rs5738." evidence="14">
    <original>E</original>
    <variation>K</variation>
    <location>
        <position position="197"/>
    </location>
</feature>
<feature type="sequence variant" id="VAR_015843" evidence="5 7 23 25">
    <original>A</original>
    <variation>P</variation>
    <location>
        <position position="502"/>
    </location>
</feature>
<feature type="sequence variant" id="VAR_081180" description="In LIDLS2; increased sodium channel activity." evidence="22">
    <location>
        <begin position="573"/>
        <end position="649"/>
    </location>
</feature>
<feature type="sequence variant" id="VAR_015844" evidence="5 23">
    <original>A</original>
    <variation>S</variation>
    <location>
        <position position="614"/>
    </location>
</feature>
<feature type="mutagenesis site" description="Loss of ubiquitination by NEDD4L." evidence="12">
    <original>Y</original>
    <variation>A</variation>
    <location>
        <position position="627"/>
    </location>
</feature>
<feature type="sequence conflict" description="In Ref. 1; CAA60633." evidence="30" ref="1">
    <original>F</original>
    <variation>S</variation>
    <location>
        <position position="339"/>
    </location>
</feature>
<feature type="sequence conflict" description="In Ref. 1; CAA60633." evidence="30" ref="1">
    <original>A</original>
    <variation>T</variation>
    <location>
        <position position="350"/>
    </location>
</feature>
<feature type="sequence conflict" description="In Ref. 1; CAA60633." evidence="30" ref="1">
    <original>Y</original>
    <variation>S</variation>
    <location>
        <position position="369"/>
    </location>
</feature>
<feature type="sequence conflict" description="In Ref. 1; CAA60633." evidence="30" ref="1">
    <original>D</original>
    <variation>G</variation>
    <location>
        <position position="375"/>
    </location>
</feature>
<feature type="sequence conflict" description="In Ref. 1; CAA60633." evidence="30" ref="1">
    <original>S</original>
    <variation>R</variation>
    <location>
        <position position="458"/>
    </location>
</feature>
<feature type="sequence conflict" description="In Ref. 5; AAC50758." evidence="30" ref="5">
    <original>EWT</original>
    <variation>DGH</variation>
    <location>
        <begin position="461"/>
        <end position="463"/>
    </location>
</feature>
<feature type="strand" evidence="34">
    <location>
        <begin position="81"/>
        <end position="90"/>
    </location>
</feature>
<feature type="strand" evidence="34">
    <location>
        <begin position="96"/>
        <end position="102"/>
    </location>
</feature>
<feature type="turn" evidence="34">
    <location>
        <begin position="107"/>
        <end position="109"/>
    </location>
</feature>
<feature type="turn" evidence="34">
    <location>
        <begin position="111"/>
        <end position="113"/>
    </location>
</feature>
<feature type="helix" evidence="34">
    <location>
        <begin position="115"/>
        <end position="128"/>
    </location>
</feature>
<feature type="helix" evidence="35">
    <location>
        <begin position="153"/>
        <end position="157"/>
    </location>
</feature>
<feature type="strand" evidence="34">
    <location>
        <begin position="161"/>
        <end position="163"/>
    </location>
</feature>
<feature type="strand" evidence="34">
    <location>
        <begin position="201"/>
        <end position="207"/>
    </location>
</feature>
<feature type="strand" evidence="34">
    <location>
        <begin position="214"/>
        <end position="221"/>
    </location>
</feature>
<feature type="helix" evidence="34">
    <location>
        <begin position="222"/>
        <end position="237"/>
    </location>
</feature>
<feature type="helix" evidence="34">
    <location>
        <begin position="238"/>
        <end position="240"/>
    </location>
</feature>
<feature type="helix" evidence="34">
    <location>
        <begin position="243"/>
        <end position="249"/>
    </location>
</feature>
<feature type="helix" evidence="34">
    <location>
        <begin position="253"/>
        <end position="256"/>
    </location>
</feature>
<feature type="strand" evidence="34">
    <location>
        <begin position="257"/>
        <end position="259"/>
    </location>
</feature>
<feature type="strand" evidence="35">
    <location>
        <begin position="265"/>
        <end position="267"/>
    </location>
</feature>
<feature type="helix" evidence="34">
    <location>
        <begin position="269"/>
        <end position="271"/>
    </location>
</feature>
<feature type="strand" evidence="34">
    <location>
        <begin position="272"/>
        <end position="277"/>
    </location>
</feature>
<feature type="turn" evidence="34">
    <location>
        <begin position="278"/>
        <end position="280"/>
    </location>
</feature>
<feature type="strand" evidence="34">
    <location>
        <begin position="281"/>
        <end position="287"/>
    </location>
</feature>
<feature type="strand" evidence="34">
    <location>
        <begin position="290"/>
        <end position="292"/>
    </location>
</feature>
<feature type="strand" evidence="34">
    <location>
        <begin position="301"/>
        <end position="311"/>
    </location>
</feature>
<feature type="helix" evidence="34">
    <location>
        <begin position="314"/>
        <end position="316"/>
    </location>
</feature>
<feature type="turn" evidence="34">
    <location>
        <begin position="319"/>
        <end position="321"/>
    </location>
</feature>
<feature type="strand" evidence="34">
    <location>
        <begin position="324"/>
        <end position="329"/>
    </location>
</feature>
<feature type="strand" evidence="34">
    <location>
        <begin position="334"/>
        <end position="336"/>
    </location>
</feature>
<feature type="helix" evidence="34">
    <location>
        <begin position="340"/>
        <end position="343"/>
    </location>
</feature>
<feature type="strand" evidence="34">
    <location>
        <begin position="345"/>
        <end position="357"/>
    </location>
</feature>
<feature type="strand" evidence="34">
    <location>
        <begin position="359"/>
        <end position="363"/>
    </location>
</feature>
<feature type="helix" evidence="34">
    <location>
        <begin position="366"/>
        <end position="370"/>
    </location>
</feature>
<feature type="turn" evidence="35">
    <location>
        <begin position="375"/>
        <end position="378"/>
    </location>
</feature>
<feature type="helix" evidence="34">
    <location>
        <begin position="391"/>
        <end position="406"/>
    </location>
</feature>
<feature type="strand" evidence="34">
    <location>
        <begin position="407"/>
        <end position="410"/>
    </location>
</feature>
<feature type="strand" evidence="34">
    <location>
        <begin position="412"/>
        <end position="414"/>
    </location>
</feature>
<feature type="turn" evidence="34">
    <location>
        <begin position="425"/>
        <end position="427"/>
    </location>
</feature>
<feature type="helix" evidence="34">
    <location>
        <begin position="432"/>
        <end position="443"/>
    </location>
</feature>
<feature type="turn" evidence="34">
    <location>
        <begin position="450"/>
        <end position="452"/>
    </location>
</feature>
<feature type="strand" evidence="34">
    <location>
        <begin position="459"/>
        <end position="462"/>
    </location>
</feature>
<feature type="strand" evidence="34">
    <location>
        <begin position="465"/>
        <end position="469"/>
    </location>
</feature>
<feature type="turn" evidence="34">
    <location>
        <begin position="474"/>
        <end position="476"/>
    </location>
</feature>
<feature type="helix" evidence="34">
    <location>
        <begin position="477"/>
        <end position="487"/>
    </location>
</feature>
<feature type="turn" evidence="34">
    <location>
        <begin position="488"/>
        <end position="491"/>
    </location>
</feature>
<feature type="turn" evidence="34">
    <location>
        <begin position="498"/>
        <end position="500"/>
    </location>
</feature>
<feature type="strand" evidence="34">
    <location>
        <begin position="501"/>
        <end position="509"/>
    </location>
</feature>
<feature type="strand" evidence="34">
    <location>
        <begin position="512"/>
        <end position="520"/>
    </location>
</feature>
<proteinExistence type="evidence at protein level"/>
<evidence type="ECO:0000250" key="1">
    <source>
        <dbReference type="UniProtKB" id="P37091"/>
    </source>
</evidence>
<evidence type="ECO:0000250" key="2">
    <source>
        <dbReference type="UniProtKB" id="Q9WU39"/>
    </source>
</evidence>
<evidence type="ECO:0000255" key="3"/>
<evidence type="ECO:0000269" key="4">
    <source>
    </source>
</evidence>
<evidence type="ECO:0000269" key="5">
    <source>
    </source>
</evidence>
<evidence type="ECO:0000269" key="6">
    <source>
    </source>
</evidence>
<evidence type="ECO:0000269" key="7">
    <source>
    </source>
</evidence>
<evidence type="ECO:0000269" key="8">
    <source>
    </source>
</evidence>
<evidence type="ECO:0000269" key="9">
    <source>
    </source>
</evidence>
<evidence type="ECO:0000269" key="10">
    <source>
    </source>
</evidence>
<evidence type="ECO:0000269" key="11">
    <source>
    </source>
</evidence>
<evidence type="ECO:0000269" key="12">
    <source>
    </source>
</evidence>
<evidence type="ECO:0000269" key="13">
    <source>
    </source>
</evidence>
<evidence type="ECO:0000269" key="14">
    <source>
    </source>
</evidence>
<evidence type="ECO:0000269" key="15">
    <source>
    </source>
</evidence>
<evidence type="ECO:0000269" key="16">
    <source>
    </source>
</evidence>
<evidence type="ECO:0000269" key="17">
    <source>
    </source>
</evidence>
<evidence type="ECO:0000269" key="18">
    <source>
    </source>
</evidence>
<evidence type="ECO:0000269" key="19">
    <source>
    </source>
</evidence>
<evidence type="ECO:0000269" key="20">
    <source>
    </source>
</evidence>
<evidence type="ECO:0000269" key="21">
    <source>
    </source>
</evidence>
<evidence type="ECO:0000269" key="22">
    <source>
    </source>
</evidence>
<evidence type="ECO:0000269" key="23">
    <source>
    </source>
</evidence>
<evidence type="ECO:0000269" key="24">
    <source>
    </source>
</evidence>
<evidence type="ECO:0000269" key="25">
    <source>
    </source>
</evidence>
<evidence type="ECO:0000269" key="26">
    <source>
    </source>
</evidence>
<evidence type="ECO:0000269" key="27">
    <source>
    </source>
</evidence>
<evidence type="ECO:0000303" key="28">
    <source>
    </source>
</evidence>
<evidence type="ECO:0000303" key="29">
    <source>
    </source>
</evidence>
<evidence type="ECO:0000305" key="30"/>
<evidence type="ECO:0000312" key="31">
    <source>
        <dbReference type="HGNC" id="HGNC:10602"/>
    </source>
</evidence>
<evidence type="ECO:0007744" key="32">
    <source>
        <dbReference type="PDB" id="6BQN"/>
    </source>
</evidence>
<evidence type="ECO:0007744" key="33">
    <source>
        <dbReference type="PDB" id="6WTH"/>
    </source>
</evidence>
<evidence type="ECO:0007829" key="34">
    <source>
        <dbReference type="PDB" id="6WTH"/>
    </source>
</evidence>
<evidence type="ECO:0007829" key="35">
    <source>
        <dbReference type="PDB" id="9BLR"/>
    </source>
</evidence>
<reference key="1">
    <citation type="journal article" date="1995" name="Genomics">
        <title>Cloning, chromosomal localization, and physical linkage of the beta and gamma subunits (SCNN1B and SCNN1G) of the human epithelial amiloride-sensitive sodium channel.</title>
        <authorList>
            <person name="Voilley N."/>
            <person name="Bassilana F."/>
            <person name="Mignon C."/>
            <person name="Merscher S."/>
            <person name="Mattei M.-G."/>
            <person name="Carle G.F."/>
            <person name="Lazdunski M."/>
            <person name="Barbry P."/>
        </authorList>
    </citation>
    <scope>NUCLEOTIDE SEQUENCE [MRNA]</scope>
    <source>
        <tissue>Lung</tissue>
    </source>
</reference>
<reference key="2">
    <citation type="journal article" date="1995" name="Am. J. Physiol.">
        <title>Cloning and expression of the beta- and gamma-subunits of the human epithelial sodium channel.</title>
        <authorList>
            <person name="McDonald F.J."/>
            <person name="Snyder P.M."/>
            <person name="Price M.P."/>
            <person name="Welsh M.J."/>
        </authorList>
    </citation>
    <scope>NUCLEOTIDE SEQUENCE [MRNA]</scope>
    <scope>FUNCTION</scope>
    <scope>TRANSPORTER ACTIVITY</scope>
    <scope>ACTIVITY REGULATION</scope>
    <scope>VARIANTS TRP-178; PRO-502 AND SER-614</scope>
    <source>
        <tissue>Kidney</tissue>
    </source>
</reference>
<reference key="3">
    <citation type="journal article" date="2002" name="J. Clin. Endocrinol. Metab.">
        <title>Novel mutations responsible for autosomal recessive multisystem pseudohypoaldosteronism and sequence variants in epithelial sodium channel alpha-, beta-, and gamma-subunit genes.</title>
        <authorList>
            <person name="Saxena A."/>
            <person name="Hanukoglu I."/>
            <person name="Saxena D."/>
            <person name="Thompson R.J."/>
            <person name="Gardiner R.M."/>
            <person name="Hanukoglu A."/>
        </authorList>
    </citation>
    <scope>NUCLEOTIDE SEQUENCE [GENOMIC DNA]</scope>
    <scope>FUNCTION</scope>
    <scope>VARIANT PRO-502</scope>
</reference>
<reference key="4">
    <citation type="journal article" date="2004" name="Genome Res.">
        <title>The status, quality, and expansion of the NIH full-length cDNA project: the Mammalian Gene Collection (MGC).</title>
        <authorList>
            <consortium name="The MGC Project Team"/>
        </authorList>
    </citation>
    <scope>NUCLEOTIDE SEQUENCE [LARGE SCALE MRNA]</scope>
    <source>
        <tissue>Placenta</tissue>
    </source>
</reference>
<reference key="5">
    <citation type="journal article" date="1996" name="J. Biol. Chem.">
        <title>Genomic organization and the 5' flanking region of the gamma subunit of the human amiloride-sensitive epithelial sodium channel.</title>
        <authorList>
            <person name="Thomas C.P."/>
            <person name="Doggett N.A."/>
            <person name="Fisher R."/>
            <person name="Stokes J.B."/>
        </authorList>
    </citation>
    <scope>NUCLEOTIDE SEQUENCE [GENOMIC DNA / MRNA] OF 1-105; 218-269; 306-392; 433-463 AND 499-515</scope>
    <scope>VARIANT PRO-502</scope>
</reference>
<reference key="6">
    <citation type="journal article" date="1995" name="Nat. Genet.">
        <title>Hypertension caused by a truncated epithelial sodium channel gamma subunit: genetic heterogeneity of Liddle syndrome.</title>
        <authorList>
            <person name="Hansson J.H."/>
            <person name="Nelson-Williams C."/>
            <person name="Suzuki H."/>
            <person name="Schild L."/>
            <person name="Shimkets R.A."/>
            <person name="Lu Y."/>
            <person name="Canessa C.M."/>
            <person name="Iwasaki T."/>
            <person name="Rossier B.C."/>
            <person name="Lifton R.P."/>
        </authorList>
    </citation>
    <scope>NUCLEOTIDE SEQUENCE [GENOMIC DNA] OF 524-649</scope>
    <scope>INVOLVEMENT IN LIDLS2</scope>
    <scope>VARIANT LIDLS2 573-TRP--LEU-649 DEL</scope>
    <scope>FUNCTION</scope>
    <scope>CHARACTERIZATION OF VARIANT LIDLS2 573-TRP--LEU-649 DEL</scope>
</reference>
<reference key="7">
    <citation type="journal article" date="1995" name="J. Biol. Chem.">
        <title>Molecular cloning and functional expression of a novel amiloride-sensitive Na+ channel.</title>
        <authorList>
            <person name="Waldmann R."/>
            <person name="Champigny G."/>
            <person name="Bassilana F."/>
            <person name="Voilley N."/>
            <person name="Lazdunski M."/>
        </authorList>
    </citation>
    <scope>SUBUNIT</scope>
</reference>
<reference key="8">
    <citation type="journal article" date="1996" name="Nat. Genet.">
        <title>A novel splice-site mutation in the gamma subunit of the epithelial sodium channel gene in three pseudohypoaldosteronism type 1 families.</title>
        <authorList>
            <person name="Strautnieks S.S."/>
            <person name="Thompson R.J."/>
            <person name="Gardiner R.M."/>
            <person name="Chung E."/>
        </authorList>
    </citation>
    <scope>INVOLVEMENT IN PHA1B3</scope>
    <scope>FUNCTION</scope>
</reference>
<reference key="9">
    <citation type="journal article" date="1997" name="J. Biol. Chem.">
        <title>Identification of novel human WW domain-containing proteins by cloning of ligand targets.</title>
        <authorList>
            <person name="Pirozzi G."/>
            <person name="McConnell S.J."/>
            <person name="Uveges A.J."/>
            <person name="Carter J.M."/>
            <person name="Sparks A.B."/>
            <person name="Kay B.K."/>
            <person name="Fowlkes D.M."/>
        </authorList>
    </citation>
    <scope>INTERACTION WITH WWP1 AND WWP2</scope>
</reference>
<reference key="10">
    <citation type="journal article" date="1998" name="J. Biol. Chem.">
        <title>Inhibition of the epithelial Na+ channel by interaction of Nedd4 with a PY motif deleted in Liddle's syndrome.</title>
        <authorList>
            <person name="Goulet C.C."/>
            <person name="Volk K.A."/>
            <person name="Adams C.M."/>
            <person name="Prince L.S."/>
            <person name="Stokes J.B."/>
            <person name="Snyder P.M."/>
        </authorList>
    </citation>
    <scope>FUNCTION</scope>
    <scope>TRANSPORTER ACTIVITY</scope>
    <scope>ACTIVITY REGULATION</scope>
    <scope>UBIQUITINATION BY NEDD4</scope>
</reference>
<reference key="11">
    <citation type="journal article" date="2001" name="J. Biol. Chem.">
        <title>The Nedd4-like protein KIAA0439 is a potential regulator of the epithelial sodium channel.</title>
        <authorList>
            <person name="Harvey K.F."/>
            <person name="Dinudom A."/>
            <person name="Cook D.I."/>
            <person name="Kumar S."/>
        </authorList>
    </citation>
    <scope>UBIQUITINATION BY NEDD4 AND NEDD4L</scope>
</reference>
<reference key="12">
    <citation type="journal article" date="2002" name="Am. J. Physiol.">
        <title>Ubiquitin-protein ligase WWP2 binds to and downregulates the epithelial Na(+) channel.</title>
        <authorList>
            <person name="McDonald F.J."/>
            <person name="Western A.H."/>
            <person name="McNeil J.D."/>
            <person name="Thomas B.C."/>
            <person name="Olson D.R."/>
            <person name="Snyder P.M."/>
        </authorList>
    </citation>
    <scope>UBIQUITINATION BY NEDD4</scope>
    <scope>INTERACTION WITH WWP2</scope>
</reference>
<reference key="13">
    <citation type="journal article" date="2002" name="J. Hypertens.">
        <title>Liddle's syndrome associated with a point mutation in the extracellular domain of the epithelial sodium channel gamma subunit.</title>
        <authorList>
            <person name="Hiltunen T.P."/>
            <person name="Hannila-Handelberg T."/>
            <person name="Petaejaeniemi N."/>
            <person name="Kantola I."/>
            <person name="Tikkanen I."/>
            <person name="Virtamo J."/>
            <person name="Gautschi I."/>
            <person name="Schild L."/>
            <person name="Kontula K."/>
        </authorList>
    </citation>
    <scope>INVOLVEMENT IN LIDLS2</scope>
</reference>
<reference key="14">
    <citation type="journal article" date="2006" name="J. Biol. Chem.">
        <title>Delta-subunit confers novel biophysical features to alpha beta gamma-human epithelial sodium channel (ENaC) via a physical interaction.</title>
        <authorList>
            <person name="Ji H.L."/>
            <person name="Su X.F."/>
            <person name="Kedar S."/>
            <person name="Li J."/>
            <person name="Barbry P."/>
            <person name="Smith P.R."/>
            <person name="Matalon S."/>
            <person name="Benos D.J."/>
        </authorList>
    </citation>
    <scope>SUBUNIT</scope>
</reference>
<reference key="15">
    <citation type="journal article" date="2007" name="Clin. Endocrinol. (Oxf.)">
        <title>A novel epithelial sodium channel gamma-subunit de novo frameshift mutation leads to Liddle syndrome.</title>
        <authorList>
            <person name="Wang Y."/>
            <person name="Zheng Y."/>
            <person name="Chen J."/>
            <person name="Wu H."/>
            <person name="Zheng D."/>
            <person name="Hui R."/>
        </authorList>
    </citation>
    <scope>INVOLVEMENT IN LIDLS2</scope>
</reference>
<reference key="16">
    <citation type="journal article" date="2007" name="J. Biol. Chem.">
        <title>Nedd4-2 catalyzes ubiquitination and degradation of cell surface ENaC.</title>
        <authorList>
            <person name="Zhou R."/>
            <person name="Patel S.V."/>
            <person name="Snyder P.M."/>
        </authorList>
    </citation>
    <scope>UBIQUITINATION BY NEDD4L</scope>
    <scope>MOTIF</scope>
    <scope>MUTAGENESIS OF TYR-627</scope>
</reference>
<reference key="17">
    <citation type="journal article" date="2009" name="Chest">
        <title>Genetic analysis of Rwandan patients with cystic fibrosis-like symptoms: identification of novel cystic fibrosis transmembrane conductance regulator and epithelial sodium channel gene variants.</title>
        <authorList>
            <person name="Mutesa L."/>
            <person name="Azad A.K."/>
            <person name="Verhaeghe C."/>
            <person name="Segers K."/>
            <person name="Vanbellinghen J.F."/>
            <person name="Ngendahayo L."/>
            <person name="Rusingiza E.K."/>
            <person name="Mutwa P.R."/>
            <person name="Rulisa S."/>
            <person name="Koulischer L."/>
            <person name="Cassiman J.J."/>
            <person name="Cuppens H."/>
            <person name="Bours V."/>
        </authorList>
    </citation>
    <scope>INVOLVEMENT IN BESC3</scope>
    <scope>FUNCTION</scope>
</reference>
<reference key="18">
    <citation type="journal article" date="2012" name="Histochem. Cell Biol.">
        <title>Epithelial sodium channels (ENaC) are uniformly distributed on motile cilia in the oviduct and the respiratory airways.</title>
        <authorList>
            <person name="Enuka Y."/>
            <person name="Hanukoglu I."/>
            <person name="Edelheit O."/>
            <person name="Vaknine H."/>
            <person name="Hanukoglu A."/>
        </authorList>
    </citation>
    <scope>TISSUE SPECIFICITY</scope>
</reference>
<reference key="19">
    <citation type="journal article" date="2012" name="J. Biol. Chem.">
        <title>Regulation of epithelial sodium channel trafficking by proprotein convertase subtilisin/kexin type 9 (PCSK9).</title>
        <authorList>
            <person name="Sharotri V."/>
            <person name="Collier D.M."/>
            <person name="Olson D.R."/>
            <person name="Zhou R."/>
            <person name="Snyder P.M."/>
        </authorList>
    </citation>
    <scope>INTERACTION WITH PCSK9</scope>
</reference>
<reference key="20">
    <citation type="journal article" date="2013" name="Am. J. Physiol.">
        <title>Identification of the SPLUNC1 ENaC-inhibitory domain yields novel strategies to treat sodium hyperabsorption in cystic fibrosis airway epithelial cultures.</title>
        <authorList>
            <person name="Hobbs C.A."/>
            <person name="Blanchard M.G."/>
            <person name="Alijevic O."/>
            <person name="Tan C.D."/>
            <person name="Kellenberger S."/>
            <person name="Bencharit S."/>
            <person name="Cao R."/>
            <person name="Kesimer M."/>
            <person name="Walton W.G."/>
            <person name="Henderson A.G."/>
            <person name="Redinbo M.R."/>
            <person name="Stutts M.J."/>
            <person name="Tarran R."/>
        </authorList>
    </citation>
    <scope>PROTEOLYTIC PROCESSING</scope>
    <scope>FUNCTION</scope>
    <scope>SUBCELLULAR LOCATION</scope>
    <scope>INTERACTION WITH BPIFA1</scope>
</reference>
<reference key="21">
    <citation type="journal article" date="2016" name="Gene">
        <title>Epithelial sodium channel (ENaC) family: Phylogeny, structure-function, tissue distribution, and associated inherited diseases.</title>
        <authorList>
            <person name="Hanukoglu I."/>
            <person name="Hanukoglu A."/>
        </authorList>
    </citation>
    <scope>NOMENCLATURE</scope>
</reference>
<reference evidence="32" key="22">
    <citation type="journal article" date="2018" name="Elife">
        <title>Structure of the human epithelial sodium channel by cryo-electron microscopy.</title>
        <authorList>
            <person name="Noreng S."/>
            <person name="Bharadwaj A."/>
            <person name="Posert R."/>
            <person name="Yoshioka C."/>
            <person name="Baconguis I."/>
        </authorList>
    </citation>
    <scope>STRUCTURE BY ELECTRON MICROSCOPY (3.90 ANGSTROMS) OF 78-524 IN COMPLEX WITH SCNN1A AND SCNN1B</scope>
    <scope>FUNCTION</scope>
    <scope>TRANSPORTER ACTIVITY</scope>
    <scope>SUBUNIT</scope>
    <scope>TOPOLOGY</scope>
    <scope>REGION</scope>
    <scope>DISULFIDE BOND</scope>
</reference>
<reference evidence="33" key="23">
    <citation type="journal article" date="2020" name="Elife">
        <title>Molecular principles of assembly, activation, and inhibition in epithelial sodium channel.</title>
        <authorList>
            <person name="Noreng S."/>
            <person name="Posert R."/>
            <person name="Bharadwaj A."/>
            <person name="Houser A."/>
            <person name="Baconguis I."/>
        </authorList>
    </citation>
    <scope>STRUCTURE BY ELECTRON MICROSCOPY (3.06 ANGSTROMS) IN COMPLEX WITH SCNN1A AND SCNN1B</scope>
    <scope>FUNCTION</scope>
    <scope>TRANSPORTER ACTIVITY</scope>
    <scope>SUBUNIT</scope>
    <scope>TOPOLOGY</scope>
    <scope>REGION</scope>
    <scope>DISULFIDE BOND</scope>
</reference>
<reference key="24">
    <citation type="journal article" date="1999" name="J. Clin. Endocrinol. Metab.">
        <title>Polymorphisms of amiloride-sensitive sodium channel subunits in five sporadic cases of pseudohypoaldosteronism: do they have pathologic potential?</title>
        <authorList>
            <person name="Arai K."/>
            <person name="Zachman K."/>
            <person name="Shibasaki T."/>
            <person name="Chrousos G.P."/>
        </authorList>
    </citation>
    <scope>VARIANTS TRP-178; PRO-502 AND SER-614</scope>
</reference>
<reference key="25">
    <citation type="journal article" date="1999" name="Nat. Genet.">
        <title>Patterns of single-nucleotide polymorphisms in candidate genes for blood-pressure homeostasis.</title>
        <authorList>
            <person name="Halushka M.K."/>
            <person name="Fan J.-B."/>
            <person name="Bentley K."/>
            <person name="Hsie L."/>
            <person name="Shen N."/>
            <person name="Weder A."/>
            <person name="Cooper R."/>
            <person name="Lipshutz R."/>
            <person name="Chakravarti A."/>
        </authorList>
    </citation>
    <scope>VARIANTS CYS-49 AND SER-183</scope>
</reference>
<reference key="26">
    <citation type="journal article" date="2006" name="Science">
        <title>The consensus coding sequences of human breast and colorectal cancers.</title>
        <authorList>
            <person name="Sjoeblom T."/>
            <person name="Jones S."/>
            <person name="Wood L.D."/>
            <person name="Parsons D.W."/>
            <person name="Lin J."/>
            <person name="Barber T.D."/>
            <person name="Mandelker D."/>
            <person name="Leary R.J."/>
            <person name="Ptak J."/>
            <person name="Silliman N."/>
            <person name="Szabo S."/>
            <person name="Buckhaults P."/>
            <person name="Farrell C."/>
            <person name="Meeh P."/>
            <person name="Markowitz S.D."/>
            <person name="Willis J."/>
            <person name="Dawson D."/>
            <person name="Willson J.K.V."/>
            <person name="Gazdar A.F."/>
            <person name="Hartigan J."/>
            <person name="Wu L."/>
            <person name="Liu C."/>
            <person name="Parmigiani G."/>
            <person name="Park B.H."/>
            <person name="Bachman K.E."/>
            <person name="Papadopoulos N."/>
            <person name="Vogelstein B."/>
            <person name="Kinzler K.W."/>
            <person name="Velculescu V.E."/>
        </authorList>
    </citation>
    <scope>VARIANT [LARGE SCALE ANALYSIS] ARG-58</scope>
</reference>
<reference key="27">
    <citation type="journal article" date="2008" name="Respir. Res.">
        <title>Could a defective epithelial sodium channel lead to bronchiectasis.</title>
        <authorList>
            <person name="Fajac I."/>
            <person name="Viel M."/>
            <person name="Sublemontier S."/>
            <person name="Hubert D."/>
            <person name="Bienvenu T."/>
        </authorList>
    </citation>
    <scope>VARIANTS SER-183 AND LYS-197</scope>
    <scope>INVOLVEMENT IN BESC3</scope>
    <scope>FUNCTION</scope>
</reference>
<dbReference type="EMBL" id="X87160">
    <property type="protein sequence ID" value="CAA60633.1"/>
    <property type="molecule type" value="mRNA"/>
</dbReference>
<dbReference type="EMBL" id="L36592">
    <property type="protein sequence ID" value="AAA75460.1"/>
    <property type="molecule type" value="mRNA"/>
</dbReference>
<dbReference type="EMBL" id="AF356502">
    <property type="protein sequence ID" value="AAK50910.1"/>
    <property type="molecule type" value="Genomic_DNA"/>
</dbReference>
<dbReference type="EMBL" id="AF356493">
    <property type="protein sequence ID" value="AAK50910.1"/>
    <property type="status" value="JOINED"/>
    <property type="molecule type" value="Genomic_DNA"/>
</dbReference>
<dbReference type="EMBL" id="AF356494">
    <property type="protein sequence ID" value="AAK50910.1"/>
    <property type="status" value="JOINED"/>
    <property type="molecule type" value="Genomic_DNA"/>
</dbReference>
<dbReference type="EMBL" id="AF356495">
    <property type="protein sequence ID" value="AAK50910.1"/>
    <property type="status" value="JOINED"/>
    <property type="molecule type" value="Genomic_DNA"/>
</dbReference>
<dbReference type="EMBL" id="AF356496">
    <property type="protein sequence ID" value="AAK50910.1"/>
    <property type="status" value="JOINED"/>
    <property type="molecule type" value="Genomic_DNA"/>
</dbReference>
<dbReference type="EMBL" id="AF356497">
    <property type="protein sequence ID" value="AAK50910.1"/>
    <property type="status" value="JOINED"/>
    <property type="molecule type" value="Genomic_DNA"/>
</dbReference>
<dbReference type="EMBL" id="AF356498">
    <property type="protein sequence ID" value="AAK50910.1"/>
    <property type="status" value="JOINED"/>
    <property type="molecule type" value="Genomic_DNA"/>
</dbReference>
<dbReference type="EMBL" id="AF356499">
    <property type="protein sequence ID" value="AAK50910.1"/>
    <property type="status" value="JOINED"/>
    <property type="molecule type" value="Genomic_DNA"/>
</dbReference>
<dbReference type="EMBL" id="AF356500">
    <property type="protein sequence ID" value="AAK50910.1"/>
    <property type="status" value="JOINED"/>
    <property type="molecule type" value="Genomic_DNA"/>
</dbReference>
<dbReference type="EMBL" id="AF356501">
    <property type="protein sequence ID" value="AAK50910.1"/>
    <property type="status" value="JOINED"/>
    <property type="molecule type" value="Genomic_DNA"/>
</dbReference>
<dbReference type="EMBL" id="BC059391">
    <property type="protein sequence ID" value="AAH59391.1"/>
    <property type="molecule type" value="mRNA"/>
</dbReference>
<dbReference type="EMBL" id="BC069652">
    <property type="protein sequence ID" value="AAH69652.1"/>
    <property type="molecule type" value="mRNA"/>
</dbReference>
<dbReference type="EMBL" id="U48936">
    <property type="protein sequence ID" value="AAC50737.1"/>
    <property type="molecule type" value="mRNA"/>
</dbReference>
<dbReference type="EMBL" id="U53836">
    <property type="protein sequence ID" value="AAC50744.1"/>
    <property type="molecule type" value="Genomic_DNA"/>
</dbReference>
<dbReference type="EMBL" id="U53837">
    <property type="protein sequence ID" value="AAC50745.1"/>
    <property type="molecule type" value="Genomic_DNA"/>
</dbReference>
<dbReference type="EMBL" id="U53841">
    <property type="protein sequence ID" value="AAC50749.1"/>
    <property type="molecule type" value="Genomic_DNA"/>
</dbReference>
<dbReference type="EMBL" id="U53844">
    <property type="protein sequence ID" value="AAC50752.1"/>
    <property type="molecule type" value="Genomic_DNA"/>
</dbReference>
<dbReference type="EMBL" id="U53845">
    <property type="protein sequence ID" value="AAC50753.1"/>
    <property type="molecule type" value="Genomic_DNA"/>
</dbReference>
<dbReference type="EMBL" id="U53846">
    <property type="protein sequence ID" value="AAC50754.1"/>
    <property type="molecule type" value="Genomic_DNA"/>
</dbReference>
<dbReference type="EMBL" id="U53847">
    <property type="protein sequence ID" value="AAC50755.1"/>
    <property type="molecule type" value="Genomic_DNA"/>
</dbReference>
<dbReference type="EMBL" id="U53850">
    <property type="protein sequence ID" value="AAC50758.1"/>
    <property type="molecule type" value="Genomic_DNA"/>
</dbReference>
<dbReference type="EMBL" id="U53852">
    <property type="protein sequence ID" value="AAC50760.1"/>
    <property type="molecule type" value="Genomic_DNA"/>
</dbReference>
<dbReference type="EMBL" id="U35630">
    <property type="protein sequence ID" value="AAC50217.1"/>
    <property type="molecule type" value="Genomic_DNA"/>
</dbReference>
<dbReference type="CCDS" id="CCDS10608.1"/>
<dbReference type="PIR" id="I38204">
    <property type="entry name" value="I38204"/>
</dbReference>
<dbReference type="PIR" id="I64847">
    <property type="entry name" value="I64847"/>
</dbReference>
<dbReference type="RefSeq" id="NP_001030.2">
    <property type="nucleotide sequence ID" value="NM_001039.3"/>
</dbReference>
<dbReference type="PDB" id="6BQN">
    <property type="method" value="EM"/>
    <property type="resolution" value="3.90 A"/>
    <property type="chains" value="C=78-524"/>
</dbReference>
<dbReference type="PDB" id="6WTH">
    <property type="method" value="EM"/>
    <property type="resolution" value="3.06 A"/>
    <property type="chains" value="C=1-649"/>
</dbReference>
<dbReference type="PDB" id="9BLR">
    <property type="method" value="EM"/>
    <property type="resolution" value="3.38 A"/>
    <property type="chains" value="C=1-649"/>
</dbReference>
<dbReference type="PDB" id="9BTG">
    <property type="method" value="EM"/>
    <property type="resolution" value="3.12 A"/>
    <property type="chains" value="C=1-649"/>
</dbReference>
<dbReference type="PDB" id="9BTU">
    <property type="method" value="EM"/>
    <property type="resolution" value="3.68 A"/>
    <property type="chains" value="C=1-649"/>
</dbReference>
<dbReference type="PDBsum" id="6BQN"/>
<dbReference type="PDBsum" id="6WTH"/>
<dbReference type="PDBsum" id="9BLR"/>
<dbReference type="PDBsum" id="9BTG"/>
<dbReference type="PDBsum" id="9BTU"/>
<dbReference type="EMDB" id="EMD-21896"/>
<dbReference type="EMDB" id="EMD-44674"/>
<dbReference type="EMDB" id="EMD-44889"/>
<dbReference type="EMDB" id="EMD-44896"/>
<dbReference type="EMDB" id="EMD-7130"/>
<dbReference type="SMR" id="P51170"/>
<dbReference type="BioGRID" id="112244">
    <property type="interactions" value="18"/>
</dbReference>
<dbReference type="ComplexPortal" id="CPX-2188">
    <property type="entry name" value="Amiloride-sensitive sodium channel complex, alpha-beta-gamma"/>
</dbReference>
<dbReference type="ComplexPortal" id="CPX-312">
    <property type="entry name" value="Amiloride-sensitive sodium channel complex, delta-alpha-beta-gamma"/>
</dbReference>
<dbReference type="ComplexPortal" id="CPX-313">
    <property type="entry name" value="Amiloride-sensitive sodium channel complex, delta-beta-gamma"/>
</dbReference>
<dbReference type="CORUM" id="P51170"/>
<dbReference type="ELM" id="P51170"/>
<dbReference type="FunCoup" id="P51170">
    <property type="interactions" value="128"/>
</dbReference>
<dbReference type="IntAct" id="P51170">
    <property type="interactions" value="5"/>
</dbReference>
<dbReference type="MINT" id="P51170"/>
<dbReference type="STRING" id="9606.ENSP00000300061"/>
<dbReference type="ChEMBL" id="CHEMBL1628484"/>
<dbReference type="DrugBank" id="DB00594">
    <property type="generic name" value="Amiloride"/>
</dbReference>
<dbReference type="DrugBank" id="DB14509">
    <property type="generic name" value="Lithium carbonate"/>
</dbReference>
<dbReference type="DrugBank" id="DB00384">
    <property type="generic name" value="Triamterene"/>
</dbReference>
<dbReference type="DrugCentral" id="P51170"/>
<dbReference type="GuidetoPHARMACOLOGY" id="741"/>
<dbReference type="TCDB" id="1.A.6.1.1">
    <property type="family name" value="the epithelial na(+) channel (enac) family"/>
</dbReference>
<dbReference type="GlyCosmos" id="P51170">
    <property type="glycosylation" value="2 sites, No reported glycans"/>
</dbReference>
<dbReference type="GlyGen" id="P51170">
    <property type="glycosylation" value="2 sites"/>
</dbReference>
<dbReference type="iPTMnet" id="P51170"/>
<dbReference type="PhosphoSitePlus" id="P51170"/>
<dbReference type="BioMuta" id="SCNN1G"/>
<dbReference type="DMDM" id="108885072"/>
<dbReference type="MassIVE" id="P51170"/>
<dbReference type="PaxDb" id="9606-ENSP00000300061"/>
<dbReference type="PeptideAtlas" id="P51170"/>
<dbReference type="Antibodypedia" id="25924">
    <property type="antibodies" value="381 antibodies from 33 providers"/>
</dbReference>
<dbReference type="DNASU" id="6340"/>
<dbReference type="Ensembl" id="ENST00000300061.3">
    <property type="protein sequence ID" value="ENSP00000300061.2"/>
    <property type="gene ID" value="ENSG00000166828.3"/>
</dbReference>
<dbReference type="GeneID" id="6340"/>
<dbReference type="KEGG" id="hsa:6340"/>
<dbReference type="MANE-Select" id="ENST00000300061.3">
    <property type="protein sequence ID" value="ENSP00000300061.2"/>
    <property type="RefSeq nucleotide sequence ID" value="NM_001039.4"/>
    <property type="RefSeq protein sequence ID" value="NP_001030.2"/>
</dbReference>
<dbReference type="UCSC" id="uc002dlm.2">
    <property type="organism name" value="human"/>
</dbReference>
<dbReference type="AGR" id="HGNC:10602"/>
<dbReference type="CTD" id="6340"/>
<dbReference type="DisGeNET" id="6340"/>
<dbReference type="GeneCards" id="SCNN1G"/>
<dbReference type="HGNC" id="HGNC:10602">
    <property type="gene designation" value="SCNN1G"/>
</dbReference>
<dbReference type="HPA" id="ENSG00000166828">
    <property type="expression patterns" value="Tissue enhanced (kidney)"/>
</dbReference>
<dbReference type="MalaCards" id="SCNN1G"/>
<dbReference type="MIM" id="600761">
    <property type="type" value="gene"/>
</dbReference>
<dbReference type="MIM" id="613071">
    <property type="type" value="phenotype"/>
</dbReference>
<dbReference type="MIM" id="618114">
    <property type="type" value="phenotype"/>
</dbReference>
<dbReference type="MIM" id="620126">
    <property type="type" value="phenotype"/>
</dbReference>
<dbReference type="neXtProt" id="NX_P51170"/>
<dbReference type="OpenTargets" id="ENSG00000166828"/>
<dbReference type="Orphanet" id="171876">
    <property type="disease" value="Generalized pseudohypoaldosteronism type 1"/>
</dbReference>
<dbReference type="Orphanet" id="60033">
    <property type="disease" value="Idiopathic bronchiectasis"/>
</dbReference>
<dbReference type="Orphanet" id="526">
    <property type="disease" value="Liddle syndrome"/>
</dbReference>
<dbReference type="PharmGKB" id="PA307"/>
<dbReference type="VEuPathDB" id="HostDB:ENSG00000166828"/>
<dbReference type="eggNOG" id="KOG4294">
    <property type="taxonomic scope" value="Eukaryota"/>
</dbReference>
<dbReference type="GeneTree" id="ENSGT00940000160352"/>
<dbReference type="HOGENOM" id="CLU_020415_0_0_1"/>
<dbReference type="InParanoid" id="P51170"/>
<dbReference type="OMA" id="KKYPNWM"/>
<dbReference type="OrthoDB" id="6021021at2759"/>
<dbReference type="PAN-GO" id="P51170">
    <property type="GO annotations" value="3 GO annotations based on evolutionary models"/>
</dbReference>
<dbReference type="PhylomeDB" id="P51170"/>
<dbReference type="TreeFam" id="TF330663"/>
<dbReference type="PathwayCommons" id="P51170"/>
<dbReference type="Reactome" id="R-HSA-2672351">
    <property type="pathway name" value="Stimuli-sensing channels"/>
</dbReference>
<dbReference type="Reactome" id="R-HSA-9730628">
    <property type="pathway name" value="Sensory perception of salty taste"/>
</dbReference>
<dbReference type="SignaLink" id="P51170"/>
<dbReference type="SIGNOR" id="P51170"/>
<dbReference type="BioGRID-ORCS" id="6340">
    <property type="hits" value="9 hits in 1157 CRISPR screens"/>
</dbReference>
<dbReference type="ChiTaRS" id="SCNN1G">
    <property type="organism name" value="human"/>
</dbReference>
<dbReference type="GeneWiki" id="SCNN1G"/>
<dbReference type="GenomeRNAi" id="6340"/>
<dbReference type="Pharos" id="P51170">
    <property type="development level" value="Tclin"/>
</dbReference>
<dbReference type="PRO" id="PR:P51170"/>
<dbReference type="Proteomes" id="UP000005640">
    <property type="component" value="Chromosome 16"/>
</dbReference>
<dbReference type="RNAct" id="P51170">
    <property type="molecule type" value="protein"/>
</dbReference>
<dbReference type="Bgee" id="ENSG00000166828">
    <property type="expression patterns" value="Expressed in renal medulla and 99 other cell types or tissues"/>
</dbReference>
<dbReference type="ExpressionAtlas" id="P51170">
    <property type="expression patterns" value="baseline and differential"/>
</dbReference>
<dbReference type="GO" id="GO:0016324">
    <property type="term" value="C:apical plasma membrane"/>
    <property type="evidence" value="ECO:0000314"/>
    <property type="project" value="UniProtKB"/>
</dbReference>
<dbReference type="GO" id="GO:0009897">
    <property type="term" value="C:external side of plasma membrane"/>
    <property type="evidence" value="ECO:0007669"/>
    <property type="project" value="Ensembl"/>
</dbReference>
<dbReference type="GO" id="GO:0070062">
    <property type="term" value="C:extracellular exosome"/>
    <property type="evidence" value="ECO:0000314"/>
    <property type="project" value="UniProtKB"/>
</dbReference>
<dbReference type="GO" id="GO:0005654">
    <property type="term" value="C:nucleoplasm"/>
    <property type="evidence" value="ECO:0000314"/>
    <property type="project" value="HPA"/>
</dbReference>
<dbReference type="GO" id="GO:0005886">
    <property type="term" value="C:plasma membrane"/>
    <property type="evidence" value="ECO:0000314"/>
    <property type="project" value="UniProtKB"/>
</dbReference>
<dbReference type="GO" id="GO:0034706">
    <property type="term" value="C:sodium channel complex"/>
    <property type="evidence" value="ECO:0000314"/>
    <property type="project" value="UniProtKB"/>
</dbReference>
<dbReference type="GO" id="GO:0015280">
    <property type="term" value="F:ligand-gated sodium channel activity"/>
    <property type="evidence" value="ECO:0007669"/>
    <property type="project" value="Ensembl"/>
</dbReference>
<dbReference type="GO" id="GO:0005216">
    <property type="term" value="F:monoatomic ion channel activity"/>
    <property type="evidence" value="ECO:0000315"/>
    <property type="project" value="CACAO"/>
</dbReference>
<dbReference type="GO" id="GO:0050699">
    <property type="term" value="F:WW domain binding"/>
    <property type="evidence" value="ECO:0000353"/>
    <property type="project" value="BHF-UCL"/>
</dbReference>
<dbReference type="GO" id="GO:0071468">
    <property type="term" value="P:cellular response to acidic pH"/>
    <property type="evidence" value="ECO:0000314"/>
    <property type="project" value="ComplexPortal"/>
</dbReference>
<dbReference type="GO" id="GO:1904045">
    <property type="term" value="P:cellular response to aldosterone"/>
    <property type="evidence" value="ECO:0000303"/>
    <property type="project" value="ComplexPortal"/>
</dbReference>
<dbReference type="GO" id="GO:1904117">
    <property type="term" value="P:cellular response to vasopressin"/>
    <property type="evidence" value="ECO:0000303"/>
    <property type="project" value="ComplexPortal"/>
</dbReference>
<dbReference type="GO" id="GO:0006883">
    <property type="term" value="P:intracellular sodium ion homeostasis"/>
    <property type="evidence" value="ECO:0000314"/>
    <property type="project" value="ComplexPortal"/>
</dbReference>
<dbReference type="GO" id="GO:0050891">
    <property type="term" value="P:multicellular organismal-level water homeostasis"/>
    <property type="evidence" value="ECO:0000314"/>
    <property type="project" value="UniProtKB"/>
</dbReference>
<dbReference type="GO" id="GO:0008217">
    <property type="term" value="P:regulation of blood pressure"/>
    <property type="evidence" value="ECO:0000303"/>
    <property type="project" value="ComplexPortal"/>
</dbReference>
<dbReference type="GO" id="GO:0050914">
    <property type="term" value="P:sensory perception of salty taste"/>
    <property type="evidence" value="ECO:0000303"/>
    <property type="project" value="ComplexPortal"/>
</dbReference>
<dbReference type="GO" id="GO:0050915">
    <property type="term" value="P:sensory perception of sour taste"/>
    <property type="evidence" value="ECO:0000303"/>
    <property type="project" value="ComplexPortal"/>
</dbReference>
<dbReference type="GO" id="GO:0055078">
    <property type="term" value="P:sodium ion homeostasis"/>
    <property type="evidence" value="ECO:0000314"/>
    <property type="project" value="UniProtKB"/>
</dbReference>
<dbReference type="GO" id="GO:0098719">
    <property type="term" value="P:sodium ion import across plasma membrane"/>
    <property type="evidence" value="ECO:0000314"/>
    <property type="project" value="ComplexPortal"/>
</dbReference>
<dbReference type="GO" id="GO:0035725">
    <property type="term" value="P:sodium ion transmembrane transport"/>
    <property type="evidence" value="ECO:0000314"/>
    <property type="project" value="UniProtKB"/>
</dbReference>
<dbReference type="FunFam" id="1.10.287.770:FF:000005">
    <property type="entry name" value="Amiloride-sensitive sodium channel subunit gamma"/>
    <property type="match status" value="1"/>
</dbReference>
<dbReference type="FunFam" id="2.60.470.10:FF:000005">
    <property type="entry name" value="Amiloride-sensitive sodium channel subunit gamma"/>
    <property type="match status" value="1"/>
</dbReference>
<dbReference type="Gene3D" id="2.60.470.10">
    <property type="entry name" value="Acid-sensing ion channels like domains"/>
    <property type="match status" value="1"/>
</dbReference>
<dbReference type="Gene3D" id="1.10.287.770">
    <property type="entry name" value="YojJ-like"/>
    <property type="match status" value="1"/>
</dbReference>
<dbReference type="InterPro" id="IPR001873">
    <property type="entry name" value="ENaC"/>
</dbReference>
<dbReference type="InterPro" id="IPR004724">
    <property type="entry name" value="ENaC_chordates"/>
</dbReference>
<dbReference type="InterPro" id="IPR020903">
    <property type="entry name" value="ENaC_CS"/>
</dbReference>
<dbReference type="NCBIfam" id="TIGR00859">
    <property type="entry name" value="ENaC"/>
    <property type="match status" value="1"/>
</dbReference>
<dbReference type="PANTHER" id="PTHR11690:SF19">
    <property type="entry name" value="AMILORIDE-SENSITIVE SODIUM CHANNEL SUBUNIT GAMMA"/>
    <property type="match status" value="1"/>
</dbReference>
<dbReference type="PANTHER" id="PTHR11690">
    <property type="entry name" value="AMILORIDE-SENSITIVE SODIUM CHANNEL-RELATED"/>
    <property type="match status" value="1"/>
</dbReference>
<dbReference type="Pfam" id="PF00858">
    <property type="entry name" value="ASC"/>
    <property type="match status" value="1"/>
</dbReference>
<dbReference type="PRINTS" id="PR01078">
    <property type="entry name" value="AMINACHANNEL"/>
</dbReference>
<dbReference type="PROSITE" id="PS01206">
    <property type="entry name" value="ASC"/>
    <property type="match status" value="1"/>
</dbReference>